<protein>
    <recommendedName>
        <fullName evidence="1">Single-stranded DNA-binding protein</fullName>
        <shortName evidence="1">SSB</shortName>
    </recommendedName>
</protein>
<evidence type="ECO:0000255" key="1">
    <source>
        <dbReference type="HAMAP-Rule" id="MF_00984"/>
    </source>
</evidence>
<evidence type="ECO:0000256" key="2">
    <source>
        <dbReference type="SAM" id="MobiDB-lite"/>
    </source>
</evidence>
<gene>
    <name type="primary">ssb</name>
    <name type="ordered locus">BruAb1_1108</name>
</gene>
<keyword id="KW-0227">DNA damage</keyword>
<keyword id="KW-0233">DNA recombination</keyword>
<keyword id="KW-0234">DNA repair</keyword>
<keyword id="KW-0235">DNA replication</keyword>
<keyword id="KW-0238">DNA-binding</keyword>
<dbReference type="EMBL" id="AE017223">
    <property type="protein sequence ID" value="AAX74449.1"/>
    <property type="molecule type" value="Genomic_DNA"/>
</dbReference>
<dbReference type="RefSeq" id="WP_002964231.1">
    <property type="nucleotide sequence ID" value="NC_006932.1"/>
</dbReference>
<dbReference type="SMR" id="P0C118"/>
<dbReference type="EnsemblBacteria" id="AAX74449">
    <property type="protein sequence ID" value="AAX74449"/>
    <property type="gene ID" value="BruAb1_1108"/>
</dbReference>
<dbReference type="GeneID" id="93016557"/>
<dbReference type="KEGG" id="bmb:BruAb1_1108"/>
<dbReference type="HOGENOM" id="CLU_078758_0_1_5"/>
<dbReference type="Proteomes" id="UP000000540">
    <property type="component" value="Chromosome I"/>
</dbReference>
<dbReference type="GO" id="GO:0009295">
    <property type="term" value="C:nucleoid"/>
    <property type="evidence" value="ECO:0007669"/>
    <property type="project" value="TreeGrafter"/>
</dbReference>
<dbReference type="GO" id="GO:0003697">
    <property type="term" value="F:single-stranded DNA binding"/>
    <property type="evidence" value="ECO:0007669"/>
    <property type="project" value="UniProtKB-UniRule"/>
</dbReference>
<dbReference type="GO" id="GO:0006310">
    <property type="term" value="P:DNA recombination"/>
    <property type="evidence" value="ECO:0007669"/>
    <property type="project" value="UniProtKB-UniRule"/>
</dbReference>
<dbReference type="GO" id="GO:0006281">
    <property type="term" value="P:DNA repair"/>
    <property type="evidence" value="ECO:0007669"/>
    <property type="project" value="UniProtKB-UniRule"/>
</dbReference>
<dbReference type="GO" id="GO:0006260">
    <property type="term" value="P:DNA replication"/>
    <property type="evidence" value="ECO:0007669"/>
    <property type="project" value="UniProtKB-UniRule"/>
</dbReference>
<dbReference type="CDD" id="cd04496">
    <property type="entry name" value="SSB_OBF"/>
    <property type="match status" value="1"/>
</dbReference>
<dbReference type="Gene3D" id="2.40.50.140">
    <property type="entry name" value="Nucleic acid-binding proteins"/>
    <property type="match status" value="1"/>
</dbReference>
<dbReference type="HAMAP" id="MF_00984">
    <property type="entry name" value="SSB"/>
    <property type="match status" value="1"/>
</dbReference>
<dbReference type="InterPro" id="IPR012340">
    <property type="entry name" value="NA-bd_OB-fold"/>
</dbReference>
<dbReference type="InterPro" id="IPR000424">
    <property type="entry name" value="Primosome_PriB/ssb"/>
</dbReference>
<dbReference type="InterPro" id="IPR011344">
    <property type="entry name" value="ssDNA-bd"/>
</dbReference>
<dbReference type="NCBIfam" id="TIGR00621">
    <property type="entry name" value="ssb"/>
    <property type="match status" value="1"/>
</dbReference>
<dbReference type="PANTHER" id="PTHR10302">
    <property type="entry name" value="SINGLE-STRANDED DNA-BINDING PROTEIN"/>
    <property type="match status" value="1"/>
</dbReference>
<dbReference type="PANTHER" id="PTHR10302:SF27">
    <property type="entry name" value="SINGLE-STRANDED DNA-BINDING PROTEIN"/>
    <property type="match status" value="1"/>
</dbReference>
<dbReference type="Pfam" id="PF00436">
    <property type="entry name" value="SSB"/>
    <property type="match status" value="1"/>
</dbReference>
<dbReference type="SUPFAM" id="SSF50249">
    <property type="entry name" value="Nucleic acid-binding proteins"/>
    <property type="match status" value="1"/>
</dbReference>
<dbReference type="PROSITE" id="PS50935">
    <property type="entry name" value="SSB"/>
    <property type="match status" value="1"/>
</dbReference>
<comment type="function">
    <text evidence="1">Plays an important role in DNA replication, recombination and repair. Binds to ssDNA and to an array of partner proteins to recruit them to their sites of action during DNA metabolism.</text>
</comment>
<comment type="subunit">
    <text evidence="1">Homotetramer.</text>
</comment>
<name>SSB_BRUAB</name>
<proteinExistence type="inferred from homology"/>
<sequence length="168" mass="18398">MAGSVNKVILVGNLGADPEIRRLNSGDMVANLRIATSESWRDRQTGERKDRTEWHSVVIFNENLAKVAEQYLKKGAKVYIEGALQTRKWQDQNGNDRYSKEIVLQKFRGELQMLDSRSEGGEGRSFGGGGNRNQMSDYSGGGGDFGSSGPSSGSSGGFSRDLDDEIPF</sequence>
<feature type="chain" id="PRO_0000096013" description="Single-stranded DNA-binding protein">
    <location>
        <begin position="1"/>
        <end position="168"/>
    </location>
</feature>
<feature type="domain" description="SSB" evidence="1">
    <location>
        <begin position="5"/>
        <end position="111"/>
    </location>
</feature>
<feature type="DNA-binding region" evidence="1">
    <location>
        <begin position="54"/>
        <end position="60"/>
    </location>
</feature>
<feature type="region of interest" description="Disordered" evidence="2">
    <location>
        <begin position="113"/>
        <end position="168"/>
    </location>
</feature>
<feature type="short sequence motif" description="Important for interaction with partner proteins" evidence="1">
    <location>
        <begin position="163"/>
        <end position="168"/>
    </location>
</feature>
<feature type="compositionally biased region" description="Low complexity" evidence="2">
    <location>
        <begin position="147"/>
        <end position="159"/>
    </location>
</feature>
<accession>P0C118</accession>
<accession>Q07432</accession>
<accession>Q57D35</accession>
<reference key="1">
    <citation type="journal article" date="2005" name="J. Bacteriol.">
        <title>Completion of the genome sequence of Brucella abortus and comparison to the highly similar genomes of Brucella melitensis and Brucella suis.</title>
        <authorList>
            <person name="Halling S.M."/>
            <person name="Peterson-Burch B.D."/>
            <person name="Bricker B.J."/>
            <person name="Zuerner R.L."/>
            <person name="Qing Z."/>
            <person name="Li L.-L."/>
            <person name="Kapur V."/>
            <person name="Alt D.P."/>
            <person name="Olsen S.C."/>
        </authorList>
    </citation>
    <scope>NUCLEOTIDE SEQUENCE [LARGE SCALE GENOMIC DNA]</scope>
    <source>
        <strain>9-941</strain>
    </source>
</reference>
<organism>
    <name type="scientific">Brucella abortus biovar 1 (strain 9-941)</name>
    <dbReference type="NCBI Taxonomy" id="262698"/>
    <lineage>
        <taxon>Bacteria</taxon>
        <taxon>Pseudomonadati</taxon>
        <taxon>Pseudomonadota</taxon>
        <taxon>Alphaproteobacteria</taxon>
        <taxon>Hyphomicrobiales</taxon>
        <taxon>Brucellaceae</taxon>
        <taxon>Brucella/Ochrobactrum group</taxon>
        <taxon>Brucella</taxon>
    </lineage>
</organism>